<name>PSPA_MYCTA</name>
<feature type="chain" id="PRO_0000300065" description="PspA protein">
    <location>
        <begin position="1"/>
        <end position="270"/>
    </location>
</feature>
<feature type="region of interest" description="Disordered" evidence="2">
    <location>
        <begin position="238"/>
        <end position="270"/>
    </location>
</feature>
<feature type="compositionally biased region" description="Low complexity" evidence="2">
    <location>
        <begin position="240"/>
        <end position="258"/>
    </location>
</feature>
<dbReference type="EMBL" id="M69187">
    <property type="protein sequence ID" value="AAA73065.1"/>
    <property type="molecule type" value="Genomic_DNA"/>
</dbReference>
<dbReference type="EMBL" id="CP000611">
    <property type="protein sequence ID" value="ABQ74547.1"/>
    <property type="molecule type" value="Genomic_DNA"/>
</dbReference>
<dbReference type="PIR" id="A60176">
    <property type="entry name" value="A60176"/>
</dbReference>
<dbReference type="RefSeq" id="WP_003414030.1">
    <property type="nucleotide sequence ID" value="NZ_CP016972.1"/>
</dbReference>
<dbReference type="SMR" id="A5U697"/>
<dbReference type="GeneID" id="45426731"/>
<dbReference type="KEGG" id="mra:MRA_2770"/>
<dbReference type="eggNOG" id="COG1842">
    <property type="taxonomic scope" value="Bacteria"/>
</dbReference>
<dbReference type="HOGENOM" id="CLU_048860_0_0_11"/>
<dbReference type="Proteomes" id="UP000001988">
    <property type="component" value="Chromosome"/>
</dbReference>
<dbReference type="GO" id="GO:0005737">
    <property type="term" value="C:cytoplasm"/>
    <property type="evidence" value="ECO:0007669"/>
    <property type="project" value="UniProtKB-SubCell"/>
</dbReference>
<dbReference type="InterPro" id="IPR007157">
    <property type="entry name" value="PspA_VIPP1"/>
</dbReference>
<dbReference type="Pfam" id="PF04012">
    <property type="entry name" value="PspA_IM30"/>
    <property type="match status" value="1"/>
</dbReference>
<reference key="1">
    <citation type="journal article" date="1990" name="Res. Microbiol.">
        <title>Nucleotide sequence of the gene encoding the 35-kDa protein of Mycobacterium tuberculosis.</title>
        <authorList>
            <person name="O'Connor S.P."/>
            <person name="Rumschlag H.S."/>
            <person name="Mayer L.W."/>
        </authorList>
    </citation>
    <scope>NUCLEOTIDE SEQUENCE [GENOMIC DNA]</scope>
</reference>
<reference key="2">
    <citation type="journal article" date="2008" name="PLoS ONE">
        <title>Genetic basis of virulence attenuation revealed by comparative genomic analysis of Mycobacterium tuberculosis strain H37Ra versus H37Rv.</title>
        <authorList>
            <person name="Zheng H."/>
            <person name="Lu L."/>
            <person name="Wang B."/>
            <person name="Pu S."/>
            <person name="Zhang X."/>
            <person name="Zhu G."/>
            <person name="Shi W."/>
            <person name="Zhang L."/>
            <person name="Wang H."/>
            <person name="Wang S."/>
            <person name="Zhao G."/>
            <person name="Zhang Y."/>
        </authorList>
    </citation>
    <scope>NUCLEOTIDE SEQUENCE [LARGE SCALE GENOMIC DNA]</scope>
    <source>
        <strain>ATCC 25177 / H37Ra</strain>
    </source>
</reference>
<sequence length="270" mass="29258">MANPFVKAWKYLMALFSSKIDEHADPKVQIQQAIEEAQRTHQALTQQAAQVIGNQRQLEMRLNRQLADIEKLQVNVRQALTLADQATAAGDAAKATEYNNAAEAFAAQLVTAEQSVEDLKTLHDQALSAAAQAKKAVERNAMVLQQKIAERTKLLSQLEQAKMQEQVSASLRSMSELAAPGNTPSLDEVRDKIERRYANAIGSAELAESSVQGRMLEVEQAGIQMAGHSRLEQIRASMRGEALPAGGTTATPRPATETSGGAIAEQPYGQ</sequence>
<protein>
    <recommendedName>
        <fullName evidence="1">PspA protein</fullName>
    </recommendedName>
    <alternativeName>
        <fullName evidence="1">35 kDa protein</fullName>
    </alternativeName>
</protein>
<proteinExistence type="inferred from homology"/>
<keyword id="KW-0963">Cytoplasm</keyword>
<keyword id="KW-1185">Reference proteome</keyword>
<keyword id="KW-0346">Stress response</keyword>
<comment type="function">
    <text evidence="1">Involved in resistance to stress. Associates with and regulates lipid droplets (LDs) homeostasis under conditions of stress and may regulate non-replicating persistence (NRP). Could be involved in preservation of envelope integrity and tolerance to surface stress.</text>
</comment>
<comment type="subcellular location">
    <subcellularLocation>
        <location evidence="1">Cytoplasm</location>
    </subcellularLocation>
    <text evidence="1">Localizes to the surface of lipid droplets (LDs).</text>
</comment>
<comment type="similarity">
    <text evidence="3">Belongs to the PspA/Vipp/IM30 family.</text>
</comment>
<organism>
    <name type="scientific">Mycobacterium tuberculosis (strain ATCC 25177 / H37Ra)</name>
    <dbReference type="NCBI Taxonomy" id="419947"/>
    <lineage>
        <taxon>Bacteria</taxon>
        <taxon>Bacillati</taxon>
        <taxon>Actinomycetota</taxon>
        <taxon>Actinomycetes</taxon>
        <taxon>Mycobacteriales</taxon>
        <taxon>Mycobacteriaceae</taxon>
        <taxon>Mycobacterium</taxon>
        <taxon>Mycobacterium tuberculosis complex</taxon>
    </lineage>
</organism>
<gene>
    <name evidence="1" type="primary">pspA</name>
    <name type="ordered locus">MRA_2770</name>
</gene>
<accession>A5U697</accession>
<accession>P31511</accession>
<evidence type="ECO:0000250" key="1">
    <source>
        <dbReference type="UniProtKB" id="P9WHP5"/>
    </source>
</evidence>
<evidence type="ECO:0000256" key="2">
    <source>
        <dbReference type="SAM" id="MobiDB-lite"/>
    </source>
</evidence>
<evidence type="ECO:0000305" key="3"/>